<gene>
    <name evidence="1" type="primary">rpmD</name>
    <name type="ordered locus">BB_0496</name>
</gene>
<proteinExistence type="inferred from homology"/>
<comment type="subunit">
    <text evidence="1">Part of the 50S ribosomal subunit.</text>
</comment>
<comment type="similarity">
    <text evidence="1">Belongs to the universal ribosomal protein uL30 family.</text>
</comment>
<comment type="sequence caution" evidence="2">
    <conflict type="erroneous initiation">
        <sequence resource="EMBL-CDS" id="AAC66846"/>
    </conflict>
</comment>
<accession>O51449</accession>
<dbReference type="EMBL" id="AE000783">
    <property type="protein sequence ID" value="AAC66846.1"/>
    <property type="status" value="ALT_INIT"/>
    <property type="molecule type" value="Genomic_DNA"/>
</dbReference>
<dbReference type="PIR" id="G70161">
    <property type="entry name" value="G70161"/>
</dbReference>
<dbReference type="RefSeq" id="NP_212630.1">
    <property type="nucleotide sequence ID" value="NC_001318.1"/>
</dbReference>
<dbReference type="SMR" id="O51449"/>
<dbReference type="STRING" id="224326.BB_0496"/>
<dbReference type="PaxDb" id="224326-BB_0496"/>
<dbReference type="EnsemblBacteria" id="AAC66846">
    <property type="protein sequence ID" value="AAC66846"/>
    <property type="gene ID" value="BB_0496"/>
</dbReference>
<dbReference type="KEGG" id="bbu:BB_0496"/>
<dbReference type="PATRIC" id="fig|224326.49.peg.887"/>
<dbReference type="HOGENOM" id="CLU_177546_0_0_12"/>
<dbReference type="OrthoDB" id="351029at2"/>
<dbReference type="Proteomes" id="UP000001807">
    <property type="component" value="Chromosome"/>
</dbReference>
<dbReference type="GO" id="GO:0015934">
    <property type="term" value="C:large ribosomal subunit"/>
    <property type="evidence" value="ECO:0007669"/>
    <property type="project" value="InterPro"/>
</dbReference>
<dbReference type="GO" id="GO:0003735">
    <property type="term" value="F:structural constituent of ribosome"/>
    <property type="evidence" value="ECO:0007669"/>
    <property type="project" value="InterPro"/>
</dbReference>
<dbReference type="GO" id="GO:0006412">
    <property type="term" value="P:translation"/>
    <property type="evidence" value="ECO:0007669"/>
    <property type="project" value="UniProtKB-UniRule"/>
</dbReference>
<dbReference type="Gene3D" id="3.30.1390.20">
    <property type="entry name" value="Ribosomal protein L30, ferredoxin-like fold domain"/>
    <property type="match status" value="1"/>
</dbReference>
<dbReference type="HAMAP" id="MF_01371_B">
    <property type="entry name" value="Ribosomal_uL30_B"/>
    <property type="match status" value="1"/>
</dbReference>
<dbReference type="InterPro" id="IPR036919">
    <property type="entry name" value="Ribo_uL30_ferredoxin-like_sf"/>
</dbReference>
<dbReference type="InterPro" id="IPR005996">
    <property type="entry name" value="Ribosomal_uL30_bac-type"/>
</dbReference>
<dbReference type="InterPro" id="IPR016082">
    <property type="entry name" value="Ribosomal_uL30_ferredoxin-like"/>
</dbReference>
<dbReference type="NCBIfam" id="TIGR01308">
    <property type="entry name" value="rpmD_bact"/>
    <property type="match status" value="1"/>
</dbReference>
<dbReference type="Pfam" id="PF00327">
    <property type="entry name" value="Ribosomal_L30"/>
    <property type="match status" value="1"/>
</dbReference>
<dbReference type="SUPFAM" id="SSF55129">
    <property type="entry name" value="Ribosomal protein L30p/L7e"/>
    <property type="match status" value="1"/>
</dbReference>
<feature type="chain" id="PRO_0000104584" description="Large ribosomal subunit protein uL30">
    <location>
        <begin position="1"/>
        <end position="71"/>
    </location>
</feature>
<sequence>MENNRKIISKNNINVQVFLVRSLIGKLNKKVKVLKALGLNKIGDKKVHFLNESIKGMLNETINMILLSEVM</sequence>
<protein>
    <recommendedName>
        <fullName evidence="1">Large ribosomal subunit protein uL30</fullName>
    </recommendedName>
    <alternativeName>
        <fullName evidence="2">50S ribosomal protein L30</fullName>
    </alternativeName>
</protein>
<name>RL30_BORBU</name>
<evidence type="ECO:0000255" key="1">
    <source>
        <dbReference type="HAMAP-Rule" id="MF_01371"/>
    </source>
</evidence>
<evidence type="ECO:0000305" key="2"/>
<organism>
    <name type="scientific">Borreliella burgdorferi (strain ATCC 35210 / DSM 4680 / CIP 102532 / B31)</name>
    <name type="common">Borrelia burgdorferi</name>
    <dbReference type="NCBI Taxonomy" id="224326"/>
    <lineage>
        <taxon>Bacteria</taxon>
        <taxon>Pseudomonadati</taxon>
        <taxon>Spirochaetota</taxon>
        <taxon>Spirochaetia</taxon>
        <taxon>Spirochaetales</taxon>
        <taxon>Borreliaceae</taxon>
        <taxon>Borreliella</taxon>
    </lineage>
</organism>
<reference key="1">
    <citation type="journal article" date="1997" name="Nature">
        <title>Genomic sequence of a Lyme disease spirochaete, Borrelia burgdorferi.</title>
        <authorList>
            <person name="Fraser C.M."/>
            <person name="Casjens S."/>
            <person name="Huang W.M."/>
            <person name="Sutton G.G."/>
            <person name="Clayton R.A."/>
            <person name="Lathigra R."/>
            <person name="White O."/>
            <person name="Ketchum K.A."/>
            <person name="Dodson R.J."/>
            <person name="Hickey E.K."/>
            <person name="Gwinn M.L."/>
            <person name="Dougherty B.A."/>
            <person name="Tomb J.-F."/>
            <person name="Fleischmann R.D."/>
            <person name="Richardson D.L."/>
            <person name="Peterson J.D."/>
            <person name="Kerlavage A.R."/>
            <person name="Quackenbush J."/>
            <person name="Salzberg S.L."/>
            <person name="Hanson M."/>
            <person name="van Vugt R."/>
            <person name="Palmer N."/>
            <person name="Adams M.D."/>
            <person name="Gocayne J.D."/>
            <person name="Weidman J.F."/>
            <person name="Utterback T.R."/>
            <person name="Watthey L."/>
            <person name="McDonald L.A."/>
            <person name="Artiach P."/>
            <person name="Bowman C."/>
            <person name="Garland S.A."/>
            <person name="Fujii C."/>
            <person name="Cotton M.D."/>
            <person name="Horst K."/>
            <person name="Roberts K.M."/>
            <person name="Hatch B."/>
            <person name="Smith H.O."/>
            <person name="Venter J.C."/>
        </authorList>
    </citation>
    <scope>NUCLEOTIDE SEQUENCE [LARGE SCALE GENOMIC DNA]</scope>
    <source>
        <strain>ATCC 35210 / DSM 4680 / CIP 102532 / B31</strain>
    </source>
</reference>
<keyword id="KW-1185">Reference proteome</keyword>
<keyword id="KW-0687">Ribonucleoprotein</keyword>
<keyword id="KW-0689">Ribosomal protein</keyword>